<keyword id="KW-0131">Cell cycle</keyword>
<keyword id="KW-0132">Cell division</keyword>
<keyword id="KW-0717">Septation</keyword>
<protein>
    <recommendedName>
        <fullName evidence="1">Putative septation protein SpoVG</fullName>
    </recommendedName>
</protein>
<feature type="chain" id="PRO_0000157206" description="Putative septation protein SpoVG">
    <location>
        <begin position="1"/>
        <end position="100"/>
    </location>
</feature>
<reference key="1">
    <citation type="journal article" date="2004" name="Proc. Natl. Acad. Sci. U.S.A.">
        <title>Complete genomes of two clinical Staphylococcus aureus strains: evidence for the rapid evolution of virulence and drug resistance.</title>
        <authorList>
            <person name="Holden M.T.G."/>
            <person name="Feil E.J."/>
            <person name="Lindsay J.A."/>
            <person name="Peacock S.J."/>
            <person name="Day N.P.J."/>
            <person name="Enright M.C."/>
            <person name="Foster T.J."/>
            <person name="Moore C.E."/>
            <person name="Hurst L."/>
            <person name="Atkin R."/>
            <person name="Barron A."/>
            <person name="Bason N."/>
            <person name="Bentley S.D."/>
            <person name="Chillingworth C."/>
            <person name="Chillingworth T."/>
            <person name="Churcher C."/>
            <person name="Clark L."/>
            <person name="Corton C."/>
            <person name="Cronin A."/>
            <person name="Doggett J."/>
            <person name="Dowd L."/>
            <person name="Feltwell T."/>
            <person name="Hance Z."/>
            <person name="Harris B."/>
            <person name="Hauser H."/>
            <person name="Holroyd S."/>
            <person name="Jagels K."/>
            <person name="James K.D."/>
            <person name="Lennard N."/>
            <person name="Line A."/>
            <person name="Mayes R."/>
            <person name="Moule S."/>
            <person name="Mungall K."/>
            <person name="Ormond D."/>
            <person name="Quail M.A."/>
            <person name="Rabbinowitsch E."/>
            <person name="Rutherford K.M."/>
            <person name="Sanders M."/>
            <person name="Sharp S."/>
            <person name="Simmonds M."/>
            <person name="Stevens K."/>
            <person name="Whitehead S."/>
            <person name="Barrell B.G."/>
            <person name="Spratt B.G."/>
            <person name="Parkhill J."/>
        </authorList>
    </citation>
    <scope>NUCLEOTIDE SEQUENCE [LARGE SCALE GENOMIC DNA]</scope>
    <source>
        <strain>MRSA252</strain>
    </source>
</reference>
<comment type="function">
    <text evidence="1">Could be involved in septation.</text>
</comment>
<comment type="similarity">
    <text evidence="1">Belongs to the SpoVG family.</text>
</comment>
<sequence>MKVTDVRLRKIQTDGRMKALVSITLDEAFVIHDLRVIEGNSGLFVAMPSKRTPDGEFRDIAHPINSDMRQEIQDAVMKVYDEIDEVVPDKNATSEDSEEA</sequence>
<accession>Q6GJH3</accession>
<gene>
    <name evidence="1" type="primary">spoVG</name>
    <name type="ordered locus">SAR0499</name>
</gene>
<name>SP5G_STAAR</name>
<dbReference type="EMBL" id="BX571856">
    <property type="protein sequence ID" value="CAG39521.1"/>
    <property type="molecule type" value="Genomic_DNA"/>
</dbReference>
<dbReference type="RefSeq" id="WP_000868996.1">
    <property type="nucleotide sequence ID" value="NC_002952.2"/>
</dbReference>
<dbReference type="SMR" id="Q6GJH3"/>
<dbReference type="KEGG" id="sar:SAR0499"/>
<dbReference type="HOGENOM" id="CLU_103669_2_1_9"/>
<dbReference type="Proteomes" id="UP000000596">
    <property type="component" value="Chromosome"/>
</dbReference>
<dbReference type="GO" id="GO:0000917">
    <property type="term" value="P:division septum assembly"/>
    <property type="evidence" value="ECO:0007669"/>
    <property type="project" value="UniProtKB-KW"/>
</dbReference>
<dbReference type="GO" id="GO:0030435">
    <property type="term" value="P:sporulation resulting in formation of a cellular spore"/>
    <property type="evidence" value="ECO:0007669"/>
    <property type="project" value="InterPro"/>
</dbReference>
<dbReference type="Gene3D" id="3.30.1120.40">
    <property type="entry name" value="Stage V sporulation protein G"/>
    <property type="match status" value="1"/>
</dbReference>
<dbReference type="HAMAP" id="MF_00819">
    <property type="entry name" value="SpoVG"/>
    <property type="match status" value="1"/>
</dbReference>
<dbReference type="InterPro" id="IPR007170">
    <property type="entry name" value="SpoVG"/>
</dbReference>
<dbReference type="InterPro" id="IPR036751">
    <property type="entry name" value="SpoVG_sf"/>
</dbReference>
<dbReference type="NCBIfam" id="NF009749">
    <property type="entry name" value="PRK13259.1"/>
    <property type="match status" value="1"/>
</dbReference>
<dbReference type="PANTHER" id="PTHR38429">
    <property type="entry name" value="SEPTATION PROTEIN SPOVG-RELATED"/>
    <property type="match status" value="1"/>
</dbReference>
<dbReference type="PANTHER" id="PTHR38429:SF1">
    <property type="entry name" value="SEPTATION PROTEIN SPOVG-RELATED"/>
    <property type="match status" value="1"/>
</dbReference>
<dbReference type="Pfam" id="PF04026">
    <property type="entry name" value="SpoVG"/>
    <property type="match status" value="1"/>
</dbReference>
<dbReference type="SUPFAM" id="SSF160537">
    <property type="entry name" value="SpoVG-like"/>
    <property type="match status" value="1"/>
</dbReference>
<organism>
    <name type="scientific">Staphylococcus aureus (strain MRSA252)</name>
    <dbReference type="NCBI Taxonomy" id="282458"/>
    <lineage>
        <taxon>Bacteria</taxon>
        <taxon>Bacillati</taxon>
        <taxon>Bacillota</taxon>
        <taxon>Bacilli</taxon>
        <taxon>Bacillales</taxon>
        <taxon>Staphylococcaceae</taxon>
        <taxon>Staphylococcus</taxon>
    </lineage>
</organism>
<proteinExistence type="inferred from homology"/>
<evidence type="ECO:0000255" key="1">
    <source>
        <dbReference type="HAMAP-Rule" id="MF_00819"/>
    </source>
</evidence>